<name>TP1A_RANLU</name>
<dbReference type="GO" id="GO:0005576">
    <property type="term" value="C:extracellular region"/>
    <property type="evidence" value="ECO:0007669"/>
    <property type="project" value="UniProtKB-SubCell"/>
</dbReference>
<dbReference type="GO" id="GO:0042742">
    <property type="term" value="P:defense response to bacterium"/>
    <property type="evidence" value="ECO:0007669"/>
    <property type="project" value="UniProtKB-KW"/>
</dbReference>
<keyword id="KW-0027">Amidation</keyword>
<keyword id="KW-0878">Amphibian defense peptide</keyword>
<keyword id="KW-0044">Antibiotic</keyword>
<keyword id="KW-0929">Antimicrobial</keyword>
<keyword id="KW-0903">Direct protein sequencing</keyword>
<keyword id="KW-0964">Secreted</keyword>
<evidence type="ECO:0000269" key="1">
    <source>
    </source>
</evidence>
<evidence type="ECO:0000305" key="2"/>
<sequence>VLPLISMALGKLL</sequence>
<reference key="1">
    <citation type="journal article" date="2000" name="Eur. J. Biochem.">
        <title>Peptides with antimicrobial activity from four different families isolated from the skins of the North American frogs Rana luteiventris, Rana berlandieri and Rana pipiens.</title>
        <authorList>
            <person name="Goraya J."/>
            <person name="Wang Y."/>
            <person name="Li Z."/>
            <person name="O'Flaherty M."/>
            <person name="Knoop F.C."/>
            <person name="Platz J.E."/>
            <person name="Conlon J.M."/>
        </authorList>
    </citation>
    <scope>PROTEIN SEQUENCE</scope>
    <scope>AMIDATION AT LEU-13</scope>
    <scope>FUNCTION</scope>
    <scope>MASS SPECTROMETRY</scope>
    <source>
        <tissue>Skin secretion</tissue>
    </source>
</reference>
<accession>P82830</accession>
<organism>
    <name type="scientific">Rana luteiventris</name>
    <name type="common">Columbia spotted frog</name>
    <name type="synonym">Rana pretiosa luteiventris</name>
    <dbReference type="NCBI Taxonomy" id="58176"/>
    <lineage>
        <taxon>Eukaryota</taxon>
        <taxon>Metazoa</taxon>
        <taxon>Chordata</taxon>
        <taxon>Craniata</taxon>
        <taxon>Vertebrata</taxon>
        <taxon>Euteleostomi</taxon>
        <taxon>Amphibia</taxon>
        <taxon>Batrachia</taxon>
        <taxon>Anura</taxon>
        <taxon>Neobatrachia</taxon>
        <taxon>Ranoidea</taxon>
        <taxon>Ranidae</taxon>
        <taxon>Rana</taxon>
        <taxon>Rana</taxon>
    </lineage>
</organism>
<proteinExistence type="evidence at protein level"/>
<protein>
    <recommendedName>
        <fullName>Temporin-1La</fullName>
    </recommendedName>
</protein>
<comment type="function">
    <text evidence="1">Antibacterial activity against Gram-positive bacterium S.aureus.</text>
</comment>
<comment type="subcellular location">
    <subcellularLocation>
        <location>Secreted</location>
    </subcellularLocation>
</comment>
<comment type="tissue specificity">
    <text>Expressed by the skin glands.</text>
</comment>
<comment type="mass spectrometry"/>
<comment type="similarity">
    <text evidence="2">Belongs to the frog skin active peptide (FSAP) family. Temporin subfamily.</text>
</comment>
<feature type="peptide" id="PRO_0000043575" description="Temporin-1La">
    <location>
        <begin position="1"/>
        <end position="13"/>
    </location>
</feature>
<feature type="modified residue" description="Leucine amide" evidence="1">
    <location>
        <position position="13"/>
    </location>
</feature>